<reference key="1">
    <citation type="submission" date="2008-03" db="EMBL/GenBank/DDBJ databases">
        <title>Complete sequence of Leptothrix cholodnii SP-6.</title>
        <authorList>
            <consortium name="US DOE Joint Genome Institute"/>
            <person name="Copeland A."/>
            <person name="Lucas S."/>
            <person name="Lapidus A."/>
            <person name="Glavina del Rio T."/>
            <person name="Dalin E."/>
            <person name="Tice H."/>
            <person name="Bruce D."/>
            <person name="Goodwin L."/>
            <person name="Pitluck S."/>
            <person name="Chertkov O."/>
            <person name="Brettin T."/>
            <person name="Detter J.C."/>
            <person name="Han C."/>
            <person name="Kuske C.R."/>
            <person name="Schmutz J."/>
            <person name="Larimer F."/>
            <person name="Land M."/>
            <person name="Hauser L."/>
            <person name="Kyrpides N."/>
            <person name="Lykidis A."/>
            <person name="Emerson D."/>
            <person name="Richardson P."/>
        </authorList>
    </citation>
    <scope>NUCLEOTIDE SEQUENCE [LARGE SCALE GENOMIC DNA]</scope>
    <source>
        <strain>ATCC 51168 / LMG 8142 / SP-6</strain>
    </source>
</reference>
<feature type="chain" id="PRO_1000091333" description="Leucine--tRNA ligase">
    <location>
        <begin position="1"/>
        <end position="887"/>
    </location>
</feature>
<feature type="short sequence motif" description="'HIGH' region">
    <location>
        <begin position="48"/>
        <end position="58"/>
    </location>
</feature>
<feature type="short sequence motif" description="'KMSKS' region">
    <location>
        <begin position="644"/>
        <end position="648"/>
    </location>
</feature>
<feature type="binding site" evidence="1">
    <location>
        <position position="647"/>
    </location>
    <ligand>
        <name>ATP</name>
        <dbReference type="ChEBI" id="CHEBI:30616"/>
    </ligand>
</feature>
<comment type="catalytic activity">
    <reaction evidence="1">
        <text>tRNA(Leu) + L-leucine + ATP = L-leucyl-tRNA(Leu) + AMP + diphosphate</text>
        <dbReference type="Rhea" id="RHEA:11688"/>
        <dbReference type="Rhea" id="RHEA-COMP:9613"/>
        <dbReference type="Rhea" id="RHEA-COMP:9622"/>
        <dbReference type="ChEBI" id="CHEBI:30616"/>
        <dbReference type="ChEBI" id="CHEBI:33019"/>
        <dbReference type="ChEBI" id="CHEBI:57427"/>
        <dbReference type="ChEBI" id="CHEBI:78442"/>
        <dbReference type="ChEBI" id="CHEBI:78494"/>
        <dbReference type="ChEBI" id="CHEBI:456215"/>
        <dbReference type="EC" id="6.1.1.4"/>
    </reaction>
</comment>
<comment type="subcellular location">
    <subcellularLocation>
        <location evidence="1">Cytoplasm</location>
    </subcellularLocation>
</comment>
<comment type="similarity">
    <text evidence="1">Belongs to the class-I aminoacyl-tRNA synthetase family.</text>
</comment>
<accession>B1XXY5</accession>
<gene>
    <name evidence="1" type="primary">leuS</name>
    <name type="ordered locus">Lcho_0479</name>
</gene>
<protein>
    <recommendedName>
        <fullName evidence="1">Leucine--tRNA ligase</fullName>
        <ecNumber evidence="1">6.1.1.4</ecNumber>
    </recommendedName>
    <alternativeName>
        <fullName evidence="1">Leucyl-tRNA synthetase</fullName>
        <shortName evidence="1">LeuRS</shortName>
    </alternativeName>
</protein>
<organism>
    <name type="scientific">Leptothrix cholodnii (strain ATCC 51168 / LMG 8142 / SP-6)</name>
    <name type="common">Leptothrix discophora (strain SP-6)</name>
    <dbReference type="NCBI Taxonomy" id="395495"/>
    <lineage>
        <taxon>Bacteria</taxon>
        <taxon>Pseudomonadati</taxon>
        <taxon>Pseudomonadota</taxon>
        <taxon>Betaproteobacteria</taxon>
        <taxon>Burkholderiales</taxon>
        <taxon>Sphaerotilaceae</taxon>
        <taxon>Leptothrix</taxon>
    </lineage>
</organism>
<keyword id="KW-0030">Aminoacyl-tRNA synthetase</keyword>
<keyword id="KW-0067">ATP-binding</keyword>
<keyword id="KW-0963">Cytoplasm</keyword>
<keyword id="KW-0436">Ligase</keyword>
<keyword id="KW-0547">Nucleotide-binding</keyword>
<keyword id="KW-0648">Protein biosynthesis</keyword>
<keyword id="KW-1185">Reference proteome</keyword>
<name>SYL_LEPCP</name>
<sequence length="887" mass="97733">MNEKYDPAAIESAAHAQWVAADAYRVDENARDSQGQLKPKFYACSMLPYPSGKLHMGHVRNYTINDMLTRQLRMKGMNVLMPMGWDAFGLPAENAALKNSVPPEKWTRENIATMKGQMLAMGLAIDWSREVATCDPTYYKWNQWLFLKMLEAGIAERRTQVVNWDPVDQTVLANEQVIDGRGWRSGALVEKREIPGYYLNIVKYADELLGAVANPEDPNYLSGWPERVRLMQENWIGKSEGVRFAFPHQIAGADGELIQGGKLYVFTTRADTIMGVTFCAVAPEHPLAAHAAATNPALAAFIAECAHGGTTEAELATQEKKGLPTGLFVTHPLTGAQVEVWVGNYVLMSYGDGAVMGVPAHDERDFAFAKKYGISIRQVVQAEGQTFSLDGWADWYGDKQRAVCVNSGLLDGLPYKEAVSKVAELVGAQGLGEKKTTWRLRDWGISRQRYWGTPIPIIHCDDCGSVPVPEKDLPVVLPIDCVPDGSGNPLKKRTDFLNVACPCCGKPAQRETDTMDTFVDSSWYFMRYCDARNSEQMVAGGTDYWMPMDQYIGGIEHAILHLLYARFWTKVMRDLGLVKVNEPFTKLLTQGMVLNHIYSRRTDKGGIEYFWPHEVENVFDAGGKVTGAKLKSDGSAVDYGGIGTMSKSKNNGVDPQDLINQYGADTARLFVMFASPPEQTLEWNDAGVEGAHRFLKRVWGFGVKQAELLKGATEVGAELSGDAKALRREVHLVLRQVSYDYERMQYNTVVSGSMKLLNALEAYKHDGSAGSAAVLREGYSVLLRGLYPACPHITHHLWSELGYAAKLGDLLDAPWPEVVEAALVQDEIELVLQVNGKTRGSIKVPAAADKAAIEAAAAASAEVAKFADGKPIRKLIVVPGRLVNVVV</sequence>
<dbReference type="EC" id="6.1.1.4" evidence="1"/>
<dbReference type="EMBL" id="CP001013">
    <property type="protein sequence ID" value="ACB32754.1"/>
    <property type="molecule type" value="Genomic_DNA"/>
</dbReference>
<dbReference type="RefSeq" id="WP_012345516.1">
    <property type="nucleotide sequence ID" value="NC_010524.1"/>
</dbReference>
<dbReference type="SMR" id="B1XXY5"/>
<dbReference type="STRING" id="395495.Lcho_0479"/>
<dbReference type="KEGG" id="lch:Lcho_0479"/>
<dbReference type="eggNOG" id="COG0495">
    <property type="taxonomic scope" value="Bacteria"/>
</dbReference>
<dbReference type="HOGENOM" id="CLU_004427_0_0_4"/>
<dbReference type="OrthoDB" id="9810365at2"/>
<dbReference type="Proteomes" id="UP000001693">
    <property type="component" value="Chromosome"/>
</dbReference>
<dbReference type="GO" id="GO:0005829">
    <property type="term" value="C:cytosol"/>
    <property type="evidence" value="ECO:0007669"/>
    <property type="project" value="TreeGrafter"/>
</dbReference>
<dbReference type="GO" id="GO:0002161">
    <property type="term" value="F:aminoacyl-tRNA deacylase activity"/>
    <property type="evidence" value="ECO:0007669"/>
    <property type="project" value="InterPro"/>
</dbReference>
<dbReference type="GO" id="GO:0005524">
    <property type="term" value="F:ATP binding"/>
    <property type="evidence" value="ECO:0007669"/>
    <property type="project" value="UniProtKB-UniRule"/>
</dbReference>
<dbReference type="GO" id="GO:0004823">
    <property type="term" value="F:leucine-tRNA ligase activity"/>
    <property type="evidence" value="ECO:0007669"/>
    <property type="project" value="UniProtKB-UniRule"/>
</dbReference>
<dbReference type="GO" id="GO:0006429">
    <property type="term" value="P:leucyl-tRNA aminoacylation"/>
    <property type="evidence" value="ECO:0007669"/>
    <property type="project" value="UniProtKB-UniRule"/>
</dbReference>
<dbReference type="CDD" id="cd07958">
    <property type="entry name" value="Anticodon_Ia_Leu_BEm"/>
    <property type="match status" value="1"/>
</dbReference>
<dbReference type="FunFam" id="1.10.730.10:FF:000003">
    <property type="entry name" value="Leucine--tRNA ligase"/>
    <property type="match status" value="1"/>
</dbReference>
<dbReference type="FunFam" id="3.10.20.590:FF:000001">
    <property type="entry name" value="Leucine--tRNA ligase"/>
    <property type="match status" value="1"/>
</dbReference>
<dbReference type="FunFam" id="3.40.50.620:FF:000003">
    <property type="entry name" value="Leucine--tRNA ligase"/>
    <property type="match status" value="1"/>
</dbReference>
<dbReference type="FunFam" id="3.40.50.620:FF:000056">
    <property type="entry name" value="Leucine--tRNA ligase"/>
    <property type="match status" value="1"/>
</dbReference>
<dbReference type="FunFam" id="3.90.740.10:FF:000012">
    <property type="entry name" value="Leucine--tRNA ligase"/>
    <property type="match status" value="1"/>
</dbReference>
<dbReference type="Gene3D" id="2.20.28.290">
    <property type="match status" value="1"/>
</dbReference>
<dbReference type="Gene3D" id="3.10.20.590">
    <property type="match status" value="1"/>
</dbReference>
<dbReference type="Gene3D" id="3.40.50.620">
    <property type="entry name" value="HUPs"/>
    <property type="match status" value="2"/>
</dbReference>
<dbReference type="Gene3D" id="1.10.730.10">
    <property type="entry name" value="Isoleucyl-tRNA Synthetase, Domain 1"/>
    <property type="match status" value="1"/>
</dbReference>
<dbReference type="Gene3D" id="3.90.740.10">
    <property type="entry name" value="Valyl/Leucyl/Isoleucyl-tRNA synthetase, editing domain"/>
    <property type="match status" value="1"/>
</dbReference>
<dbReference type="HAMAP" id="MF_00049_B">
    <property type="entry name" value="Leu_tRNA_synth_B"/>
    <property type="match status" value="1"/>
</dbReference>
<dbReference type="InterPro" id="IPR001412">
    <property type="entry name" value="aa-tRNA-synth_I_CS"/>
</dbReference>
<dbReference type="InterPro" id="IPR002300">
    <property type="entry name" value="aa-tRNA-synth_Ia"/>
</dbReference>
<dbReference type="InterPro" id="IPR002302">
    <property type="entry name" value="Leu-tRNA-ligase"/>
</dbReference>
<dbReference type="InterPro" id="IPR025709">
    <property type="entry name" value="Leu_tRNA-synth_edit"/>
</dbReference>
<dbReference type="InterPro" id="IPR013155">
    <property type="entry name" value="M/V/L/I-tRNA-synth_anticd-bd"/>
</dbReference>
<dbReference type="InterPro" id="IPR014729">
    <property type="entry name" value="Rossmann-like_a/b/a_fold"/>
</dbReference>
<dbReference type="InterPro" id="IPR009080">
    <property type="entry name" value="tRNAsynth_Ia_anticodon-bd"/>
</dbReference>
<dbReference type="InterPro" id="IPR009008">
    <property type="entry name" value="Val/Leu/Ile-tRNA-synth_edit"/>
</dbReference>
<dbReference type="NCBIfam" id="TIGR00396">
    <property type="entry name" value="leuS_bact"/>
    <property type="match status" value="1"/>
</dbReference>
<dbReference type="PANTHER" id="PTHR43740:SF2">
    <property type="entry name" value="LEUCINE--TRNA LIGASE, MITOCHONDRIAL"/>
    <property type="match status" value="1"/>
</dbReference>
<dbReference type="PANTHER" id="PTHR43740">
    <property type="entry name" value="LEUCYL-TRNA SYNTHETASE"/>
    <property type="match status" value="1"/>
</dbReference>
<dbReference type="Pfam" id="PF08264">
    <property type="entry name" value="Anticodon_1"/>
    <property type="match status" value="1"/>
</dbReference>
<dbReference type="Pfam" id="PF00133">
    <property type="entry name" value="tRNA-synt_1"/>
    <property type="match status" value="3"/>
</dbReference>
<dbReference type="Pfam" id="PF13603">
    <property type="entry name" value="tRNA-synt_1_2"/>
    <property type="match status" value="1"/>
</dbReference>
<dbReference type="PRINTS" id="PR00985">
    <property type="entry name" value="TRNASYNTHLEU"/>
</dbReference>
<dbReference type="SUPFAM" id="SSF47323">
    <property type="entry name" value="Anticodon-binding domain of a subclass of class I aminoacyl-tRNA synthetases"/>
    <property type="match status" value="1"/>
</dbReference>
<dbReference type="SUPFAM" id="SSF52374">
    <property type="entry name" value="Nucleotidylyl transferase"/>
    <property type="match status" value="1"/>
</dbReference>
<dbReference type="SUPFAM" id="SSF50677">
    <property type="entry name" value="ValRS/IleRS/LeuRS editing domain"/>
    <property type="match status" value="1"/>
</dbReference>
<dbReference type="PROSITE" id="PS00178">
    <property type="entry name" value="AA_TRNA_LIGASE_I"/>
    <property type="match status" value="1"/>
</dbReference>
<proteinExistence type="inferred from homology"/>
<evidence type="ECO:0000255" key="1">
    <source>
        <dbReference type="HAMAP-Rule" id="MF_00049"/>
    </source>
</evidence>